<dbReference type="EC" id="3.1.3.16"/>
<dbReference type="EMBL" id="AJ005801">
    <property type="protein sequence ID" value="CAA06704.1"/>
    <property type="molecule type" value="mRNA"/>
</dbReference>
<dbReference type="EMBL" id="AF294792">
    <property type="protein sequence ID" value="AAG02232.1"/>
    <property type="molecule type" value="mRNA"/>
</dbReference>
<dbReference type="EMBL" id="AJ271832">
    <property type="protein sequence ID" value="CAC27992.1"/>
    <property type="molecule type" value="mRNA"/>
</dbReference>
<dbReference type="EMBL" id="AJ271835">
    <property type="protein sequence ID" value="CAC27993.1"/>
    <property type="molecule type" value="mRNA"/>
</dbReference>
<dbReference type="EMBL" id="DQ023508">
    <property type="protein sequence ID" value="AAY89639.1"/>
    <property type="molecule type" value="mRNA"/>
</dbReference>
<dbReference type="EMBL" id="DQ023509">
    <property type="protein sequence ID" value="AAY89640.1"/>
    <property type="molecule type" value="mRNA"/>
</dbReference>
<dbReference type="EMBL" id="DQ023510">
    <property type="protein sequence ID" value="AAY89641.1"/>
    <property type="molecule type" value="mRNA"/>
</dbReference>
<dbReference type="EMBL" id="AF136972">
    <property type="protein sequence ID" value="AAG49433.1"/>
    <property type="molecule type" value="mRNA"/>
</dbReference>
<dbReference type="EMBL" id="AL833035">
    <property type="protein sequence ID" value="CAH56319.1"/>
    <property type="molecule type" value="mRNA"/>
</dbReference>
<dbReference type="EMBL" id="AC013717">
    <property type="protein sequence ID" value="AAX88954.1"/>
    <property type="molecule type" value="Genomic_DNA"/>
</dbReference>
<dbReference type="EMBL" id="AC019129">
    <property type="status" value="NOT_ANNOTATED_CDS"/>
    <property type="molecule type" value="Genomic_DNA"/>
</dbReference>
<dbReference type="EMBL" id="CH471053">
    <property type="protein sequence ID" value="EAX00282.1"/>
    <property type="molecule type" value="Genomic_DNA"/>
</dbReference>
<dbReference type="EMBL" id="CH471053">
    <property type="protein sequence ID" value="EAX00283.1"/>
    <property type="molecule type" value="Genomic_DNA"/>
</dbReference>
<dbReference type="EMBL" id="BC012002">
    <property type="protein sequence ID" value="AAH12002.1"/>
    <property type="molecule type" value="mRNA"/>
</dbReference>
<dbReference type="EMBL" id="BC064381">
    <property type="protein sequence ID" value="AAH64381.1"/>
    <property type="molecule type" value="mRNA"/>
</dbReference>
<dbReference type="CCDS" id="CCDS1816.1">
    <molecule id="O75688-2"/>
</dbReference>
<dbReference type="CCDS" id="CCDS1817.1">
    <molecule id="O75688-1"/>
</dbReference>
<dbReference type="CCDS" id="CCDS1818.1">
    <molecule id="O75688-3"/>
</dbReference>
<dbReference type="CCDS" id="CCDS46271.1">
    <molecule id="O75688-4"/>
</dbReference>
<dbReference type="RefSeq" id="NP_001028729.1">
    <molecule id="O75688-4"/>
    <property type="nucleotide sequence ID" value="NM_001033557.3"/>
</dbReference>
<dbReference type="RefSeq" id="NP_002697.1">
    <molecule id="O75688-1"/>
    <property type="nucleotide sequence ID" value="NM_002706.6"/>
</dbReference>
<dbReference type="RefSeq" id="NP_808907.1">
    <molecule id="O75688-2"/>
    <property type="nucleotide sequence ID" value="NM_177968.4"/>
</dbReference>
<dbReference type="RefSeq" id="NP_808908.1">
    <molecule id="O75688-3"/>
    <property type="nucleotide sequence ID" value="NM_177969.4"/>
</dbReference>
<dbReference type="RefSeq" id="XP_047300791.1">
    <molecule id="O75688-1"/>
    <property type="nucleotide sequence ID" value="XM_047444835.1"/>
</dbReference>
<dbReference type="RefSeq" id="XP_047300792.1">
    <molecule id="O75688-2"/>
    <property type="nucleotide sequence ID" value="XM_047444836.1"/>
</dbReference>
<dbReference type="RefSeq" id="XP_054198656.1">
    <molecule id="O75688-1"/>
    <property type="nucleotide sequence ID" value="XM_054342681.1"/>
</dbReference>
<dbReference type="RefSeq" id="XP_054198658.1">
    <molecule id="O75688-2"/>
    <property type="nucleotide sequence ID" value="XM_054342683.1"/>
</dbReference>
<dbReference type="PDB" id="2P8E">
    <property type="method" value="X-ray"/>
    <property type="resolution" value="1.82 A"/>
    <property type="chains" value="A/B=2-297"/>
</dbReference>
<dbReference type="PDBsum" id="2P8E"/>
<dbReference type="SMR" id="O75688"/>
<dbReference type="BioGRID" id="111490">
    <property type="interactions" value="224"/>
</dbReference>
<dbReference type="FunCoup" id="O75688">
    <property type="interactions" value="4284"/>
</dbReference>
<dbReference type="IntAct" id="O75688">
    <property type="interactions" value="112"/>
</dbReference>
<dbReference type="MINT" id="O75688"/>
<dbReference type="STRING" id="9606.ENSP00000282412"/>
<dbReference type="BindingDB" id="O75688"/>
<dbReference type="ChEMBL" id="CHEMBL2845"/>
<dbReference type="DEPOD" id="PPM1B"/>
<dbReference type="iPTMnet" id="O75688"/>
<dbReference type="MetOSite" id="O75688"/>
<dbReference type="PhosphoSitePlus" id="O75688"/>
<dbReference type="BioMuta" id="PPM1B"/>
<dbReference type="jPOST" id="O75688"/>
<dbReference type="MassIVE" id="O75688"/>
<dbReference type="PaxDb" id="9606-ENSP00000282412"/>
<dbReference type="PeptideAtlas" id="O75688"/>
<dbReference type="ProteomicsDB" id="50157">
    <molecule id="O75688-1"/>
</dbReference>
<dbReference type="ProteomicsDB" id="50158">
    <molecule id="O75688-2"/>
</dbReference>
<dbReference type="ProteomicsDB" id="50159">
    <molecule id="O75688-3"/>
</dbReference>
<dbReference type="ProteomicsDB" id="50160">
    <molecule id="O75688-4"/>
</dbReference>
<dbReference type="ProteomicsDB" id="50161">
    <molecule id="O75688-5"/>
</dbReference>
<dbReference type="Pumba" id="O75688"/>
<dbReference type="Antibodypedia" id="14962">
    <property type="antibodies" value="396 antibodies from 28 providers"/>
</dbReference>
<dbReference type="DNASU" id="5495"/>
<dbReference type="Ensembl" id="ENST00000282412.9">
    <molecule id="O75688-1"/>
    <property type="protein sequence ID" value="ENSP00000282412.4"/>
    <property type="gene ID" value="ENSG00000138032.21"/>
</dbReference>
<dbReference type="Ensembl" id="ENST00000345249.8">
    <molecule id="O75688-3"/>
    <property type="protein sequence ID" value="ENSP00000326089.4"/>
    <property type="gene ID" value="ENSG00000138032.21"/>
</dbReference>
<dbReference type="Ensembl" id="ENST00000378551.6">
    <molecule id="O75688-2"/>
    <property type="protein sequence ID" value="ENSP00000367813.2"/>
    <property type="gene ID" value="ENSG00000138032.21"/>
</dbReference>
<dbReference type="Ensembl" id="ENST00000409432.7">
    <molecule id="O75688-4"/>
    <property type="protein sequence ID" value="ENSP00000387287.3"/>
    <property type="gene ID" value="ENSG00000138032.21"/>
</dbReference>
<dbReference type="GeneID" id="5495"/>
<dbReference type="KEGG" id="hsa:5495"/>
<dbReference type="MANE-Select" id="ENST00000282412.9">
    <property type="protein sequence ID" value="ENSP00000282412.4"/>
    <property type="RefSeq nucleotide sequence ID" value="NM_002706.6"/>
    <property type="RefSeq protein sequence ID" value="NP_002697.1"/>
</dbReference>
<dbReference type="UCSC" id="uc002rtt.4">
    <molecule id="O75688-1"/>
    <property type="organism name" value="human"/>
</dbReference>
<dbReference type="AGR" id="HGNC:9276"/>
<dbReference type="CTD" id="5495"/>
<dbReference type="DisGeNET" id="5495"/>
<dbReference type="GeneCards" id="PPM1B"/>
<dbReference type="HGNC" id="HGNC:9276">
    <property type="gene designation" value="PPM1B"/>
</dbReference>
<dbReference type="HPA" id="ENSG00000138032">
    <property type="expression patterns" value="Low tissue specificity"/>
</dbReference>
<dbReference type="MalaCards" id="PPM1B"/>
<dbReference type="MIM" id="603770">
    <property type="type" value="gene"/>
</dbReference>
<dbReference type="neXtProt" id="NX_O75688"/>
<dbReference type="OpenTargets" id="ENSG00000138032"/>
<dbReference type="Orphanet" id="163693">
    <property type="disease" value="2p21 microdeletion syndrome"/>
</dbReference>
<dbReference type="PharmGKB" id="PA33604"/>
<dbReference type="VEuPathDB" id="HostDB:ENSG00000138032"/>
<dbReference type="eggNOG" id="KOG0697">
    <property type="taxonomic scope" value="Eukaryota"/>
</dbReference>
<dbReference type="GeneTree" id="ENSGT00940000156070"/>
<dbReference type="HOGENOM" id="CLU_121979_0_0_1"/>
<dbReference type="InParanoid" id="O75688"/>
<dbReference type="OMA" id="RTDPMEE"/>
<dbReference type="OrthoDB" id="10264738at2759"/>
<dbReference type="PAN-GO" id="O75688">
    <property type="GO annotations" value="6 GO annotations based on evolutionary models"/>
</dbReference>
<dbReference type="PhylomeDB" id="O75688"/>
<dbReference type="TreeFam" id="TF313590"/>
<dbReference type="PathwayCommons" id="O75688"/>
<dbReference type="Reactome" id="R-HSA-1169408">
    <property type="pathway name" value="ISG15 antiviral mechanism"/>
</dbReference>
<dbReference type="Reactome" id="R-HSA-9700645">
    <property type="pathway name" value="ALK mutants bind TKIs"/>
</dbReference>
<dbReference type="Reactome" id="R-HSA-9725370">
    <property type="pathway name" value="Signaling by ALK fusions and activated point mutants"/>
</dbReference>
<dbReference type="SignaLink" id="O75688"/>
<dbReference type="SIGNOR" id="O75688"/>
<dbReference type="BioGRID-ORCS" id="5495">
    <property type="hits" value="9 hits in 1178 CRISPR screens"/>
</dbReference>
<dbReference type="ChiTaRS" id="PPM1B">
    <property type="organism name" value="human"/>
</dbReference>
<dbReference type="EvolutionaryTrace" id="O75688"/>
<dbReference type="GeneWiki" id="PPM1B"/>
<dbReference type="GenomeRNAi" id="5495"/>
<dbReference type="Pharos" id="O75688">
    <property type="development level" value="Tchem"/>
</dbReference>
<dbReference type="PRO" id="PR:O75688"/>
<dbReference type="Proteomes" id="UP000005640">
    <property type="component" value="Chromosome 2"/>
</dbReference>
<dbReference type="RNAct" id="O75688">
    <property type="molecule type" value="protein"/>
</dbReference>
<dbReference type="Bgee" id="ENSG00000138032">
    <property type="expression patterns" value="Expressed in secondary oocyte and 210 other cell types or tissues"/>
</dbReference>
<dbReference type="ExpressionAtlas" id="O75688">
    <property type="expression patterns" value="baseline and differential"/>
</dbReference>
<dbReference type="GO" id="GO:0005829">
    <property type="term" value="C:cytosol"/>
    <property type="evidence" value="ECO:0000314"/>
    <property type="project" value="HPA"/>
</dbReference>
<dbReference type="GO" id="GO:0016020">
    <property type="term" value="C:membrane"/>
    <property type="evidence" value="ECO:0000250"/>
    <property type="project" value="UniProtKB"/>
</dbReference>
<dbReference type="GO" id="GO:0005730">
    <property type="term" value="C:nucleolus"/>
    <property type="evidence" value="ECO:0000314"/>
    <property type="project" value="HPA"/>
</dbReference>
<dbReference type="GO" id="GO:0005634">
    <property type="term" value="C:nucleus"/>
    <property type="evidence" value="ECO:0000318"/>
    <property type="project" value="GO_Central"/>
</dbReference>
<dbReference type="GO" id="GO:0000287">
    <property type="term" value="F:magnesium ion binding"/>
    <property type="evidence" value="ECO:0007669"/>
    <property type="project" value="InterPro"/>
</dbReference>
<dbReference type="GO" id="GO:0030145">
    <property type="term" value="F:manganese ion binding"/>
    <property type="evidence" value="ECO:0007669"/>
    <property type="project" value="InterPro"/>
</dbReference>
<dbReference type="GO" id="GO:0004722">
    <property type="term" value="F:protein serine/threonine phosphatase activity"/>
    <property type="evidence" value="ECO:0000314"/>
    <property type="project" value="UniProtKB"/>
</dbReference>
<dbReference type="GO" id="GO:0006499">
    <property type="term" value="P:N-terminal protein myristoylation"/>
    <property type="evidence" value="ECO:0000250"/>
    <property type="project" value="UniProtKB"/>
</dbReference>
<dbReference type="GO" id="GO:0043124">
    <property type="term" value="P:negative regulation of canonical NF-kappaB signal transduction"/>
    <property type="evidence" value="ECO:0000315"/>
    <property type="project" value="UniProtKB"/>
</dbReference>
<dbReference type="GO" id="GO:0050687">
    <property type="term" value="P:negative regulation of defense response to virus"/>
    <property type="evidence" value="ECO:0000315"/>
    <property type="project" value="UniProtKB"/>
</dbReference>
<dbReference type="GO" id="GO:0032688">
    <property type="term" value="P:negative regulation of interferon-beta production"/>
    <property type="evidence" value="ECO:0000315"/>
    <property type="project" value="UniProtKB"/>
</dbReference>
<dbReference type="GO" id="GO:1901223">
    <property type="term" value="P:negative regulation of non-canonical NF-kappaB signal transduction"/>
    <property type="evidence" value="ECO:0000315"/>
    <property type="project" value="UniProtKB"/>
</dbReference>
<dbReference type="GO" id="GO:0035970">
    <property type="term" value="P:peptidyl-threonine dephosphorylation"/>
    <property type="evidence" value="ECO:0000314"/>
    <property type="project" value="UniProtKB"/>
</dbReference>
<dbReference type="GO" id="GO:0090263">
    <property type="term" value="P:positive regulation of canonical Wnt signaling pathway"/>
    <property type="evidence" value="ECO:0000318"/>
    <property type="project" value="GO_Central"/>
</dbReference>
<dbReference type="GO" id="GO:0006470">
    <property type="term" value="P:protein dephosphorylation"/>
    <property type="evidence" value="ECO:0000315"/>
    <property type="project" value="UniProtKB"/>
</dbReference>
<dbReference type="GO" id="GO:0043122">
    <property type="term" value="P:regulation of canonical NF-kappaB signal transduction"/>
    <property type="evidence" value="ECO:0000318"/>
    <property type="project" value="GO_Central"/>
</dbReference>
<dbReference type="CDD" id="cd00143">
    <property type="entry name" value="PP2Cc"/>
    <property type="match status" value="1"/>
</dbReference>
<dbReference type="FunFam" id="1.10.10.430:FF:000001">
    <property type="entry name" value="protein phosphatase 1B isoform X1"/>
    <property type="match status" value="1"/>
</dbReference>
<dbReference type="FunFam" id="3.60.40.10:FF:000001">
    <property type="entry name" value="protein phosphatase 1B isoform X1"/>
    <property type="match status" value="1"/>
</dbReference>
<dbReference type="Gene3D" id="1.10.10.430">
    <property type="entry name" value="Phosphatase 2C, C-terminal domain suprefamily"/>
    <property type="match status" value="1"/>
</dbReference>
<dbReference type="Gene3D" id="3.60.40.10">
    <property type="entry name" value="PPM-type phosphatase domain"/>
    <property type="match status" value="1"/>
</dbReference>
<dbReference type="InterPro" id="IPR015655">
    <property type="entry name" value="PP2C"/>
</dbReference>
<dbReference type="InterPro" id="IPR000222">
    <property type="entry name" value="PP2C_BS"/>
</dbReference>
<dbReference type="InterPro" id="IPR012911">
    <property type="entry name" value="PP2C_C"/>
</dbReference>
<dbReference type="InterPro" id="IPR036580">
    <property type="entry name" value="PP2C_C_sf"/>
</dbReference>
<dbReference type="InterPro" id="IPR036457">
    <property type="entry name" value="PPM-type-like_dom_sf"/>
</dbReference>
<dbReference type="InterPro" id="IPR001932">
    <property type="entry name" value="PPM-type_phosphatase-like_dom"/>
</dbReference>
<dbReference type="PANTHER" id="PTHR47992">
    <property type="entry name" value="PROTEIN PHOSPHATASE"/>
    <property type="match status" value="1"/>
</dbReference>
<dbReference type="Pfam" id="PF00481">
    <property type="entry name" value="PP2C"/>
    <property type="match status" value="1"/>
</dbReference>
<dbReference type="Pfam" id="PF07830">
    <property type="entry name" value="PP2C_C"/>
    <property type="match status" value="1"/>
</dbReference>
<dbReference type="SMART" id="SM00332">
    <property type="entry name" value="PP2Cc"/>
    <property type="match status" value="1"/>
</dbReference>
<dbReference type="SUPFAM" id="SSF81606">
    <property type="entry name" value="PP2C-like"/>
    <property type="match status" value="1"/>
</dbReference>
<dbReference type="SUPFAM" id="SSF81601">
    <property type="entry name" value="Protein serine/threonine phosphatase 2C, C-terminal domain"/>
    <property type="match status" value="1"/>
</dbReference>
<dbReference type="PROSITE" id="PS01032">
    <property type="entry name" value="PPM_1"/>
    <property type="match status" value="1"/>
</dbReference>
<dbReference type="PROSITE" id="PS51746">
    <property type="entry name" value="PPM_2"/>
    <property type="match status" value="1"/>
</dbReference>
<sequence>MGAFLDKPKTEKHNAHGAGNGLRYGLSSMQGWRVEMEDAHTAVVGIPHGLEDWSFFAVYDGHAGSRVANYCSTHLLEHITTNEDFRAAGKSGSALELSVENVKNGIRTGFLKIDEYMRNFSDLRNGMDRSGSTAVGVMISPKHIYFINCGDSRAVLYRNGQVCFSTQDHKPCNPREKERIQNAGGSVMIQRVNGSLAVSRALGDYDYKCVDGKGPTEQLVSPEPEVYEILRAEEDEFIILACDGIWDVMSNEELCEYVKSRLEVSDDLENVCNWVVDTCLHKGSRDNMSIVLVCFSNAPKVSDEAVKKDSELDKHLESRVEEIMEKSGEEGMPDLAHVMRILSAENIPNLPPGGGLAGKRNVIEAVYSRLNPHRESDGASDEAEESGSQGKLVEALRQMRINHRGNYRQLLEEMLTSYRLAKVEGEESPAEPAATATSSNSDAGNPVTMQESHTESESGLAELDSSNEDAGTKMSGEKI</sequence>
<feature type="initiator methionine" description="Removed" evidence="11">
    <location>
        <position position="1"/>
    </location>
</feature>
<feature type="chain" id="PRO_0000057746" description="Protein phosphatase 1B">
    <location>
        <begin position="2"/>
        <end position="479"/>
    </location>
</feature>
<feature type="domain" description="PPM-type phosphatase" evidence="3">
    <location>
        <begin position="23"/>
        <end position="295"/>
    </location>
</feature>
<feature type="region of interest" description="Disordered" evidence="4">
    <location>
        <begin position="1"/>
        <end position="20"/>
    </location>
</feature>
<feature type="region of interest" description="Disordered" evidence="4">
    <location>
        <begin position="423"/>
        <end position="479"/>
    </location>
</feature>
<feature type="compositionally biased region" description="Basic and acidic residues" evidence="4">
    <location>
        <begin position="1"/>
        <end position="14"/>
    </location>
</feature>
<feature type="compositionally biased region" description="Low complexity" evidence="4">
    <location>
        <begin position="430"/>
        <end position="439"/>
    </location>
</feature>
<feature type="compositionally biased region" description="Polar residues" evidence="4">
    <location>
        <begin position="440"/>
        <end position="451"/>
    </location>
</feature>
<feature type="binding site" evidence="1">
    <location>
        <position position="60"/>
    </location>
    <ligand>
        <name>Mn(2+)</name>
        <dbReference type="ChEBI" id="CHEBI:29035"/>
        <label>1</label>
    </ligand>
</feature>
<feature type="binding site" evidence="6 18">
    <location>
        <position position="60"/>
    </location>
    <ligand>
        <name>Mn(2+)</name>
        <dbReference type="ChEBI" id="CHEBI:29035"/>
        <label>2</label>
    </ligand>
</feature>
<feature type="binding site" evidence="1">
    <location>
        <position position="61"/>
    </location>
    <ligand>
        <name>Mn(2+)</name>
        <dbReference type="ChEBI" id="CHEBI:29035"/>
        <label>1</label>
    </ligand>
</feature>
<feature type="binding site" evidence="6 18">
    <location>
        <position position="243"/>
    </location>
    <ligand>
        <name>Mn(2+)</name>
        <dbReference type="ChEBI" id="CHEBI:29035"/>
        <label>2</label>
    </ligand>
</feature>
<feature type="binding site" evidence="6 18">
    <location>
        <position position="286"/>
    </location>
    <ligand>
        <name>Mn(2+)</name>
        <dbReference type="ChEBI" id="CHEBI:29035"/>
        <label>2</label>
    </ligand>
</feature>
<feature type="modified residue" description="Phosphoserine" evidence="19">
    <location>
        <position position="386"/>
    </location>
</feature>
<feature type="lipid moiety-binding region" description="N-myristoyl glycine" evidence="11">
    <location>
        <position position="2"/>
    </location>
</feature>
<feature type="cross-link" description="Glycyl lysine isopeptide (Lys-Gly) (interchain with G-Cter in ISG15)">
    <location>
        <position position="12"/>
    </location>
</feature>
<feature type="cross-link" description="Glycyl lysine isopeptide (Lys-Gly) (interchain with G-Cter in ISG15)">
    <location>
        <position position="142"/>
    </location>
</feature>
<feature type="splice variant" id="VSP_041085" description="In isoform Beta-X." evidence="14">
    <location>
        <begin position="1"/>
        <end position="287"/>
    </location>
</feature>
<feature type="splice variant" id="VSP_043641" description="In isoform 5." evidence="15">
    <original>EIMEKS</original>
    <variation>GKTNAF</variation>
    <location>
        <begin position="322"/>
        <end position="327"/>
    </location>
</feature>
<feature type="splice variant" id="VSP_043642" description="In isoform 5." evidence="15">
    <location>
        <begin position="328"/>
        <end position="380"/>
    </location>
</feature>
<feature type="splice variant" id="VSP_005087" description="In isoform Beta-2." evidence="12 13 15 16">
    <original>ASDEAEESG</original>
    <variation>GAGDLEDPW</variation>
    <location>
        <begin position="379"/>
        <end position="387"/>
    </location>
</feature>
<feature type="splice variant" id="VSP_043643" description="In isoform 4." evidence="15">
    <original>AS</original>
    <variation>QK</variation>
    <location>
        <begin position="379"/>
        <end position="380"/>
    </location>
</feature>
<feature type="splice variant" id="VSP_043644" description="In isoform 4 and isoform 5." evidence="15">
    <location>
        <begin position="381"/>
        <end position="387"/>
    </location>
</feature>
<feature type="splice variant" id="VSP_005088" description="In isoform Beta-2, isoform 4 and isoform 5." evidence="12 13 15 16">
    <location>
        <begin position="388"/>
        <end position="479"/>
    </location>
</feature>
<feature type="strand" evidence="20">
    <location>
        <begin position="9"/>
        <end position="19"/>
    </location>
</feature>
<feature type="strand" evidence="20">
    <location>
        <begin position="22"/>
        <end position="31"/>
    </location>
</feature>
<feature type="strand" evidence="20">
    <location>
        <begin position="33"/>
        <end position="35"/>
    </location>
</feature>
<feature type="strand" evidence="20">
    <location>
        <begin position="38"/>
        <end position="46"/>
    </location>
</feature>
<feature type="turn" evidence="20">
    <location>
        <begin position="47"/>
        <end position="49"/>
    </location>
</feature>
<feature type="strand" evidence="20">
    <location>
        <begin position="50"/>
        <end position="63"/>
    </location>
</feature>
<feature type="helix" evidence="20">
    <location>
        <begin position="66"/>
        <end position="80"/>
    </location>
</feature>
<feature type="turn" evidence="20">
    <location>
        <begin position="83"/>
        <end position="85"/>
    </location>
</feature>
<feature type="helix" evidence="20">
    <location>
        <begin position="99"/>
        <end position="118"/>
    </location>
</feature>
<feature type="turn" evidence="20">
    <location>
        <begin position="121"/>
        <end position="123"/>
    </location>
</feature>
<feature type="strand" evidence="20">
    <location>
        <begin position="134"/>
        <end position="139"/>
    </location>
</feature>
<feature type="strand" evidence="20">
    <location>
        <begin position="141"/>
        <end position="151"/>
    </location>
</feature>
<feature type="strand" evidence="20">
    <location>
        <begin position="153"/>
        <end position="158"/>
    </location>
</feature>
<feature type="strand" evidence="20">
    <location>
        <begin position="161"/>
        <end position="165"/>
    </location>
</feature>
<feature type="helix" evidence="20">
    <location>
        <begin position="174"/>
        <end position="182"/>
    </location>
</feature>
<feature type="turn" evidence="20">
    <location>
        <begin position="193"/>
        <end position="195"/>
    </location>
</feature>
<feature type="helix" evidence="20">
    <location>
        <begin position="205"/>
        <end position="207"/>
    </location>
</feature>
<feature type="helix" evidence="20">
    <location>
        <begin position="215"/>
        <end position="217"/>
    </location>
</feature>
<feature type="strand" evidence="20">
    <location>
        <begin position="218"/>
        <end position="221"/>
    </location>
</feature>
<feature type="strand" evidence="20">
    <location>
        <begin position="225"/>
        <end position="230"/>
    </location>
</feature>
<feature type="strand" evidence="20">
    <location>
        <begin position="235"/>
        <end position="241"/>
    </location>
</feature>
<feature type="helix" evidence="20">
    <location>
        <begin position="243"/>
        <end position="246"/>
    </location>
</feature>
<feature type="helix" evidence="20">
    <location>
        <begin position="251"/>
        <end position="262"/>
    </location>
</feature>
<feature type="helix" evidence="20">
    <location>
        <begin position="268"/>
        <end position="281"/>
    </location>
</feature>
<feature type="strand" evidence="20">
    <location>
        <begin position="288"/>
        <end position="294"/>
    </location>
</feature>
<organism>
    <name type="scientific">Homo sapiens</name>
    <name type="common">Human</name>
    <dbReference type="NCBI Taxonomy" id="9606"/>
    <lineage>
        <taxon>Eukaryota</taxon>
        <taxon>Metazoa</taxon>
        <taxon>Chordata</taxon>
        <taxon>Craniata</taxon>
        <taxon>Vertebrata</taxon>
        <taxon>Euteleostomi</taxon>
        <taxon>Mammalia</taxon>
        <taxon>Eutheria</taxon>
        <taxon>Euarchontoglires</taxon>
        <taxon>Primates</taxon>
        <taxon>Haplorrhini</taxon>
        <taxon>Catarrhini</taxon>
        <taxon>Hominidae</taxon>
        <taxon>Homo</taxon>
    </lineage>
</organism>
<reference key="1">
    <citation type="journal article" date="1998" name="FEBS Lett.">
        <title>The cloning expression and tissue distribution of human PP2Cbeta.</title>
        <authorList>
            <person name="Marely A.E."/>
            <person name="Kline A."/>
            <person name="Crabtree G."/>
            <person name="Sullivan J.E."/>
            <person name="Beri R.K."/>
        </authorList>
    </citation>
    <scope>NUCLEOTIDE SEQUENCE [MRNA] (ISOFORM BETA-1)</scope>
    <source>
        <tissue>Liver</tissue>
    </source>
</reference>
<reference key="2">
    <citation type="journal article" date="2000" name="J. Biol. Chem.">
        <title>Dephosphorylation of human cyclin-dependent kinases by protein phosphatase type 2Calpha and beta2 isoforms.</title>
        <authorList>
            <person name="Cheng A."/>
            <person name="Kaldis P."/>
            <person name="Solomon M.J."/>
        </authorList>
    </citation>
    <scope>NUCLEOTIDE SEQUENCE [MRNA] (ISOFORM BETA-2)</scope>
</reference>
<reference key="3">
    <citation type="submission" date="2000-02" db="EMBL/GenBank/DDBJ databases">
        <title>Protein phosphatase 1B. Cloning and characterization of two major transcripts generated by alternative use of 3' exons.</title>
        <authorList>
            <person name="Seroussi E."/>
            <person name="Shani N."/>
            <person name="Hayut A."/>
            <person name="Faier S."/>
            <person name="Ben-Meir D."/>
            <person name="Divinski I."/>
            <person name="Smorodinsky N.I."/>
            <person name="Lavi S."/>
        </authorList>
    </citation>
    <scope>NUCLEOTIDE SEQUENCE [MRNA] (ISOFORMS BETA-1 AND BETA-2)</scope>
</reference>
<reference key="4">
    <citation type="journal article" date="2005" name="Genomics">
        <title>The 2p21 deletion syndrome: characterization of the transcription content.</title>
        <authorList>
            <person name="Parvari R."/>
            <person name="Gonen Y."/>
            <person name="Alshafee I."/>
            <person name="Buriakovsky S."/>
            <person name="Regev K."/>
            <person name="Hershkovitz E."/>
        </authorList>
    </citation>
    <scope>NUCLEOTIDE SEQUENCE [MRNA] (ISOFORMS BETA-2; 4 AND 5)</scope>
</reference>
<reference key="5">
    <citation type="journal article" date="2000" name="Proc. Natl. Acad. Sci. U.S.A.">
        <title>Gene expression profiling in the human hypothalamus-pituitary-adrenal axis and full-length cDNA cloning.</title>
        <authorList>
            <person name="Hu R.-M."/>
            <person name="Han Z.-G."/>
            <person name="Song H.-D."/>
            <person name="Peng Y.-D."/>
            <person name="Huang Q.-H."/>
            <person name="Ren S.-X."/>
            <person name="Gu Y.-J."/>
            <person name="Huang C.-H."/>
            <person name="Li Y.-B."/>
            <person name="Jiang C.-L."/>
            <person name="Fu G."/>
            <person name="Zhang Q.-H."/>
            <person name="Gu B.-W."/>
            <person name="Dai M."/>
            <person name="Mao Y.-F."/>
            <person name="Gao G.-F."/>
            <person name="Rong R."/>
            <person name="Ye M."/>
            <person name="Zhou J."/>
            <person name="Xu S.-H."/>
            <person name="Gu J."/>
            <person name="Shi J.-X."/>
            <person name="Jin W.-R."/>
            <person name="Zhang C.-K."/>
            <person name="Wu T.-M."/>
            <person name="Huang G.-Y."/>
            <person name="Chen Z."/>
            <person name="Chen M.-D."/>
            <person name="Chen J.-L."/>
        </authorList>
    </citation>
    <scope>NUCLEOTIDE SEQUENCE [LARGE SCALE MRNA] (ISOFORM BETA-2)</scope>
    <source>
        <tissue>Adrenal gland</tissue>
    </source>
</reference>
<reference key="6">
    <citation type="journal article" date="2007" name="BMC Genomics">
        <title>The full-ORF clone resource of the German cDNA consortium.</title>
        <authorList>
            <person name="Bechtel S."/>
            <person name="Rosenfelder H."/>
            <person name="Duda A."/>
            <person name="Schmidt C.P."/>
            <person name="Ernst U."/>
            <person name="Wellenreuther R."/>
            <person name="Mehrle A."/>
            <person name="Schuster C."/>
            <person name="Bahr A."/>
            <person name="Bloecker H."/>
            <person name="Heubner D."/>
            <person name="Hoerlein A."/>
            <person name="Michel G."/>
            <person name="Wedler H."/>
            <person name="Koehrer K."/>
            <person name="Ottenwaelder B."/>
            <person name="Poustka A."/>
            <person name="Wiemann S."/>
            <person name="Schupp I."/>
        </authorList>
    </citation>
    <scope>NUCLEOTIDE SEQUENCE [LARGE SCALE MRNA] (ISOFORM BETA-1)</scope>
    <source>
        <tissue>Stomach</tissue>
    </source>
</reference>
<reference key="7">
    <citation type="journal article" date="2005" name="Nature">
        <title>Generation and annotation of the DNA sequences of human chromosomes 2 and 4.</title>
        <authorList>
            <person name="Hillier L.W."/>
            <person name="Graves T.A."/>
            <person name="Fulton R.S."/>
            <person name="Fulton L.A."/>
            <person name="Pepin K.H."/>
            <person name="Minx P."/>
            <person name="Wagner-McPherson C."/>
            <person name="Layman D."/>
            <person name="Wylie K."/>
            <person name="Sekhon M."/>
            <person name="Becker M.C."/>
            <person name="Fewell G.A."/>
            <person name="Delehaunty K.D."/>
            <person name="Miner T.L."/>
            <person name="Nash W.E."/>
            <person name="Kremitzki C."/>
            <person name="Oddy L."/>
            <person name="Du H."/>
            <person name="Sun H."/>
            <person name="Bradshaw-Cordum H."/>
            <person name="Ali J."/>
            <person name="Carter J."/>
            <person name="Cordes M."/>
            <person name="Harris A."/>
            <person name="Isak A."/>
            <person name="van Brunt A."/>
            <person name="Nguyen C."/>
            <person name="Du F."/>
            <person name="Courtney L."/>
            <person name="Kalicki J."/>
            <person name="Ozersky P."/>
            <person name="Abbott S."/>
            <person name="Armstrong J."/>
            <person name="Belter E.A."/>
            <person name="Caruso L."/>
            <person name="Cedroni M."/>
            <person name="Cotton M."/>
            <person name="Davidson T."/>
            <person name="Desai A."/>
            <person name="Elliott G."/>
            <person name="Erb T."/>
            <person name="Fronick C."/>
            <person name="Gaige T."/>
            <person name="Haakenson W."/>
            <person name="Haglund K."/>
            <person name="Holmes A."/>
            <person name="Harkins R."/>
            <person name="Kim K."/>
            <person name="Kruchowski S.S."/>
            <person name="Strong C.M."/>
            <person name="Grewal N."/>
            <person name="Goyea E."/>
            <person name="Hou S."/>
            <person name="Levy A."/>
            <person name="Martinka S."/>
            <person name="Mead K."/>
            <person name="McLellan M.D."/>
            <person name="Meyer R."/>
            <person name="Randall-Maher J."/>
            <person name="Tomlinson C."/>
            <person name="Dauphin-Kohlberg S."/>
            <person name="Kozlowicz-Reilly A."/>
            <person name="Shah N."/>
            <person name="Swearengen-Shahid S."/>
            <person name="Snider J."/>
            <person name="Strong J.T."/>
            <person name="Thompson J."/>
            <person name="Yoakum M."/>
            <person name="Leonard S."/>
            <person name="Pearman C."/>
            <person name="Trani L."/>
            <person name="Radionenko M."/>
            <person name="Waligorski J.E."/>
            <person name="Wang C."/>
            <person name="Rock S.M."/>
            <person name="Tin-Wollam A.-M."/>
            <person name="Maupin R."/>
            <person name="Latreille P."/>
            <person name="Wendl M.C."/>
            <person name="Yang S.-P."/>
            <person name="Pohl C."/>
            <person name="Wallis J.W."/>
            <person name="Spieth J."/>
            <person name="Bieri T.A."/>
            <person name="Berkowicz N."/>
            <person name="Nelson J.O."/>
            <person name="Osborne J."/>
            <person name="Ding L."/>
            <person name="Meyer R."/>
            <person name="Sabo A."/>
            <person name="Shotland Y."/>
            <person name="Sinha P."/>
            <person name="Wohldmann P.E."/>
            <person name="Cook L.L."/>
            <person name="Hickenbotham M.T."/>
            <person name="Eldred J."/>
            <person name="Williams D."/>
            <person name="Jones T.A."/>
            <person name="She X."/>
            <person name="Ciccarelli F.D."/>
            <person name="Izaurralde E."/>
            <person name="Taylor J."/>
            <person name="Schmutz J."/>
            <person name="Myers R.M."/>
            <person name="Cox D.R."/>
            <person name="Huang X."/>
            <person name="McPherson J.D."/>
            <person name="Mardis E.R."/>
            <person name="Clifton S.W."/>
            <person name="Warren W.C."/>
            <person name="Chinwalla A.T."/>
            <person name="Eddy S.R."/>
            <person name="Marra M.A."/>
            <person name="Ovcharenko I."/>
            <person name="Furey T.S."/>
            <person name="Miller W."/>
            <person name="Eichler E.E."/>
            <person name="Bork P."/>
            <person name="Suyama M."/>
            <person name="Torrents D."/>
            <person name="Waterston R.H."/>
            <person name="Wilson R.K."/>
        </authorList>
    </citation>
    <scope>NUCLEOTIDE SEQUENCE [LARGE SCALE GENOMIC DNA]</scope>
</reference>
<reference key="8">
    <citation type="submission" date="2005-09" db="EMBL/GenBank/DDBJ databases">
        <authorList>
            <person name="Mural R.J."/>
            <person name="Istrail S."/>
            <person name="Sutton G.G."/>
            <person name="Florea L."/>
            <person name="Halpern A.L."/>
            <person name="Mobarry C.M."/>
            <person name="Lippert R."/>
            <person name="Walenz B."/>
            <person name="Shatkay H."/>
            <person name="Dew I."/>
            <person name="Miller J.R."/>
            <person name="Flanigan M.J."/>
            <person name="Edwards N.J."/>
            <person name="Bolanos R."/>
            <person name="Fasulo D."/>
            <person name="Halldorsson B.V."/>
            <person name="Hannenhalli S."/>
            <person name="Turner R."/>
            <person name="Yooseph S."/>
            <person name="Lu F."/>
            <person name="Nusskern D.R."/>
            <person name="Shue B.C."/>
            <person name="Zheng X.H."/>
            <person name="Zhong F."/>
            <person name="Delcher A.L."/>
            <person name="Huson D.H."/>
            <person name="Kravitz S.A."/>
            <person name="Mouchard L."/>
            <person name="Reinert K."/>
            <person name="Remington K.A."/>
            <person name="Clark A.G."/>
            <person name="Waterman M.S."/>
            <person name="Eichler E.E."/>
            <person name="Adams M.D."/>
            <person name="Hunkapiller M.W."/>
            <person name="Myers E.W."/>
            <person name="Venter J.C."/>
        </authorList>
    </citation>
    <scope>NUCLEOTIDE SEQUENCE [LARGE SCALE GENOMIC DNA]</scope>
</reference>
<reference key="9">
    <citation type="journal article" date="2004" name="Genome Res.">
        <title>The status, quality, and expansion of the NIH full-length cDNA project: the Mammalian Gene Collection (MGC).</title>
        <authorList>
            <consortium name="The MGC Project Team"/>
        </authorList>
    </citation>
    <scope>NUCLEOTIDE SEQUENCE [LARGE SCALE MRNA] (ISOFORMS BETA-1 AND BETA-X)</scope>
    <source>
        <tissue>Brain</tissue>
        <tissue>Urinary bladder</tissue>
    </source>
</reference>
<reference key="10">
    <citation type="journal article" date="2006" name="FEBS Lett.">
        <title>Negative regulation of protein phosphatase 2Cbeta by ISG15 conjugation.</title>
        <authorList>
            <person name="Takeuchi T."/>
            <person name="Kobayashi T."/>
            <person name="Tamura S."/>
            <person name="Yokosawa H."/>
        </authorList>
    </citation>
    <scope>ISGYLATION AT LYS-12 AND LYS-142</scope>
</reference>
<reference key="11">
    <citation type="journal article" date="2008" name="Prostate">
        <title>Increased PAK6 expression in prostate cancer and identification of PAK6 associated proteins.</title>
        <authorList>
            <person name="Kaur R."/>
            <person name="Yuan X."/>
            <person name="Lu M.L."/>
            <person name="Balk S.P."/>
        </authorList>
    </citation>
    <scope>INTERACTION WITH PAK6</scope>
</reference>
<reference key="12">
    <citation type="journal article" date="2009" name="Cell. Signal.">
        <title>PPM1A and PPM1B act as IKKbeta phosphatases to terminate TNFalpha-induced IKKbeta-NF-kappaB activation.</title>
        <authorList>
            <person name="Sun W."/>
            <person name="Yu Y."/>
            <person name="Dotti G."/>
            <person name="Shen T."/>
            <person name="Tan X."/>
            <person name="Savoldo B."/>
            <person name="Pass A.K."/>
            <person name="Chu M."/>
            <person name="Zhang D."/>
            <person name="Lu X."/>
            <person name="Fu S."/>
            <person name="Lin X."/>
            <person name="Yang J."/>
        </authorList>
    </citation>
    <scope>FUNCTION</scope>
    <scope>INTERACTION WITH IKBKB</scope>
</reference>
<reference key="13">
    <citation type="journal article" date="2011" name="BMC Syst. Biol.">
        <title>Initial characterization of the human central proteome.</title>
        <authorList>
            <person name="Burkard T.R."/>
            <person name="Planyavsky M."/>
            <person name="Kaupe I."/>
            <person name="Breitwieser F.P."/>
            <person name="Buerckstuemmer T."/>
            <person name="Bennett K.L."/>
            <person name="Superti-Furga G."/>
            <person name="Colinge J."/>
        </authorList>
    </citation>
    <scope>IDENTIFICATION BY MASS SPECTROMETRY [LARGE SCALE ANALYSIS]</scope>
</reference>
<reference key="14">
    <citation type="journal article" date="2012" name="Cell. Signal.">
        <title>Protein phosphatase 5 modulates SMAD3 function in the transforming growth factor-beta pathway.</title>
        <authorList>
            <person name="Bruce D.L."/>
            <person name="Macartney T."/>
            <person name="Yong W."/>
            <person name="Shou W."/>
            <person name="Sapkota G.P."/>
        </authorList>
    </citation>
    <scope>SUBCELLULAR LOCATION</scope>
</reference>
<reference key="15">
    <citation type="journal article" date="2012" name="Cell. Signal.">
        <title>PPM1B negatively regulates antiviral response via dephosphorylating TBK1.</title>
        <authorList>
            <person name="Zhao Y."/>
            <person name="Liang L."/>
            <person name="Fan Y."/>
            <person name="Sun S."/>
            <person name="An L."/>
            <person name="Shi Z."/>
            <person name="Cheng J."/>
            <person name="Jia W."/>
            <person name="Sun W."/>
            <person name="Mori-Akiyama Y."/>
            <person name="Zhang H."/>
            <person name="Fu S."/>
            <person name="Yang J."/>
        </authorList>
    </citation>
    <scope>FUNCTION</scope>
</reference>
<reference key="16">
    <citation type="journal article" date="2014" name="J. Proteomics">
        <title>An enzyme assisted RP-RPLC approach for in-depth analysis of human liver phosphoproteome.</title>
        <authorList>
            <person name="Bian Y."/>
            <person name="Song C."/>
            <person name="Cheng K."/>
            <person name="Dong M."/>
            <person name="Wang F."/>
            <person name="Huang J."/>
            <person name="Sun D."/>
            <person name="Wang L."/>
            <person name="Ye M."/>
            <person name="Zou H."/>
        </authorList>
    </citation>
    <scope>PHOSPHORYLATION [LARGE SCALE ANALYSIS] AT SER-386</scope>
    <scope>IDENTIFICATION BY MASS SPECTROMETRY [LARGE SCALE ANALYSIS]</scope>
    <source>
        <tissue>Liver</tissue>
    </source>
</reference>
<reference key="17">
    <citation type="journal article" date="2014" name="Nat. Commun.">
        <title>Global profiling of co- and post-translationally N-myristoylated proteomes in human cells.</title>
        <authorList>
            <person name="Thinon E."/>
            <person name="Serwa R.A."/>
            <person name="Broncel M."/>
            <person name="Brannigan J.A."/>
            <person name="Brassat U."/>
            <person name="Wright M.H."/>
            <person name="Heal W.P."/>
            <person name="Wilkinson A.J."/>
            <person name="Mann D.J."/>
            <person name="Tate E.W."/>
        </authorList>
    </citation>
    <scope>MYRISTOYLATION AT GLY-2</scope>
    <scope>CLEAVAGE OF INITIATOR METHIONINE</scope>
    <scope>IDENTIFICATION BY MASS SPECTROMETRY</scope>
</reference>
<reference key="18">
    <citation type="journal article" date="2007" name="J. Struct. Funct. Genomics">
        <title>Structural genomics of protein phosphatases.</title>
        <authorList>
            <person name="Almo S.C."/>
            <person name="Bonanno J.B."/>
            <person name="Sauder J.M."/>
            <person name="Emtage S."/>
            <person name="Dilorenzo T.P."/>
            <person name="Malashkevich V."/>
            <person name="Wasserman S.R."/>
            <person name="Swaminathan S."/>
            <person name="Eswaramoorthy S."/>
            <person name="Agarwal R."/>
            <person name="Kumaran D."/>
            <person name="Madegowda M."/>
            <person name="Ragumani S."/>
            <person name="Patskovsky Y."/>
            <person name="Alvarado J."/>
            <person name="Ramagopal U.A."/>
            <person name="Faber-Barata J."/>
            <person name="Chance M.R."/>
            <person name="Sali A."/>
            <person name="Fiser A."/>
            <person name="Zhang Z.Y."/>
            <person name="Lawrence D.S."/>
            <person name="Burley S.K."/>
        </authorList>
    </citation>
    <scope>X-RAY CRYSTALLOGRAPHY (1.82 ANGSTROMS) OF 2-297 IN COMPLEX WITH MAGNESIUM</scope>
</reference>
<gene>
    <name type="primary">PPM1B</name>
    <name type="synonym">PP2CB</name>
</gene>
<name>PPM1B_HUMAN</name>
<comment type="function">
    <text evidence="8 9">Enzyme with a broad specificity. Dephosphorylates CDK2 and CDK6 in vitro. Dephosphorylates PRKAA1 and PRKAA2. Inhibits TBK1-mediated antiviral signaling by dephosphorylating it at 'Ser-172'. Plays an important role in the termination of TNF-alpha-mediated NF-kappa-B activation through dephosphorylating and inactivating IKBKB/IKKB.</text>
</comment>
<comment type="catalytic activity">
    <reaction>
        <text>O-phospho-L-seryl-[protein] + H2O = L-seryl-[protein] + phosphate</text>
        <dbReference type="Rhea" id="RHEA:20629"/>
        <dbReference type="Rhea" id="RHEA-COMP:9863"/>
        <dbReference type="Rhea" id="RHEA-COMP:11604"/>
        <dbReference type="ChEBI" id="CHEBI:15377"/>
        <dbReference type="ChEBI" id="CHEBI:29999"/>
        <dbReference type="ChEBI" id="CHEBI:43474"/>
        <dbReference type="ChEBI" id="CHEBI:83421"/>
        <dbReference type="EC" id="3.1.3.16"/>
    </reaction>
</comment>
<comment type="catalytic activity">
    <reaction>
        <text>O-phospho-L-threonyl-[protein] + H2O = L-threonyl-[protein] + phosphate</text>
        <dbReference type="Rhea" id="RHEA:47004"/>
        <dbReference type="Rhea" id="RHEA-COMP:11060"/>
        <dbReference type="Rhea" id="RHEA-COMP:11605"/>
        <dbReference type="ChEBI" id="CHEBI:15377"/>
        <dbReference type="ChEBI" id="CHEBI:30013"/>
        <dbReference type="ChEBI" id="CHEBI:43474"/>
        <dbReference type="ChEBI" id="CHEBI:61977"/>
        <dbReference type="EC" id="3.1.3.16"/>
    </reaction>
</comment>
<comment type="cofactor">
    <cofactor evidence="1">
        <name>Mg(2+)</name>
        <dbReference type="ChEBI" id="CHEBI:18420"/>
    </cofactor>
    <cofactor evidence="1">
        <name>Mn(2+)</name>
        <dbReference type="ChEBI" id="CHEBI:29035"/>
    </cofactor>
    <text evidence="1">Binds 2 magnesium or manganese ions per subunit.</text>
</comment>
<comment type="subunit">
    <text evidence="1 7 8">Monomer (By similarity). Interacts with PAK6. Interacts with the phosphorylated form of IKBKB/IKKB.</text>
</comment>
<comment type="interaction">
    <interactant intactId="EBI-1047039">
        <id>O75688</id>
    </interactant>
    <interactant intactId="EBI-743313">
        <id>P49407</id>
        <label>ARRB1</label>
    </interactant>
    <organismsDiffer>false</organismsDiffer>
    <experiments>4</experiments>
</comment>
<comment type="interaction">
    <interactant intactId="EBI-1047039">
        <id>O75688</id>
    </interactant>
    <interactant intactId="EBI-714559">
        <id>P32121</id>
        <label>ARRB2</label>
    </interactant>
    <organismsDiffer>false</organismsDiffer>
    <experiments>4</experiments>
</comment>
<comment type="interaction">
    <interactant intactId="EBI-1047039">
        <id>O75688</id>
    </interactant>
    <interactant intactId="EBI-746466">
        <id>P05161</id>
        <label>ISG15</label>
    </interactant>
    <organismsDiffer>false</organismsDiffer>
    <experiments>2</experiments>
</comment>
<comment type="interaction">
    <interactant intactId="EBI-17715099">
        <id>O75688-3</id>
    </interactant>
    <interactant intactId="EBI-77889">
        <id>Q9UI95</id>
        <label>MAD2L2</label>
    </interactant>
    <organismsDiffer>false</organismsDiffer>
    <experiments>3</experiments>
</comment>
<comment type="interaction">
    <interactant intactId="EBI-17715099">
        <id>O75688-3</id>
    </interactant>
    <interactant intactId="EBI-10222416">
        <id>Q01449</id>
        <label>MYL7</label>
    </interactant>
    <organismsDiffer>false</organismsDiffer>
    <experiments>3</experiments>
</comment>
<comment type="subcellular location">
    <subcellularLocation>
        <location evidence="10">Cytoplasm</location>
        <location evidence="10">Cytosol</location>
    </subcellularLocation>
    <subcellularLocation>
        <location evidence="2">Membrane</location>
        <topology evidence="2">Lipid-anchor</topology>
    </subcellularLocation>
    <text evidence="2">Weakly associates at the membrane and N-myristoylation mediates the membrane localization.</text>
</comment>
<comment type="alternative products">
    <event type="alternative splicing"/>
    <isoform>
        <id>O75688-1</id>
        <name>Beta-1</name>
        <name>Beta-X</name>
        <name>PPM1B2</name>
        <sequence type="displayed"/>
    </isoform>
    <isoform>
        <id>O75688-2</id>
        <name>Beta-2</name>
        <name>PPM1B1</name>
        <sequence type="described" ref="VSP_005087 VSP_005088"/>
    </isoform>
    <isoform>
        <id>O75688-3</id>
        <name>Beta-X</name>
        <sequence type="described" ref="VSP_041085"/>
    </isoform>
    <isoform>
        <id>O75688-4</id>
        <name>4</name>
        <sequence type="described" ref="VSP_043643 VSP_043644 VSP_005088"/>
    </isoform>
    <isoform>
        <id>O75688-5</id>
        <name>5</name>
        <sequence type="described" ref="VSP_043641 VSP_043642 VSP_043644 VSP_005088"/>
    </isoform>
    <text>Additional isoforms seem to exist.</text>
</comment>
<comment type="tissue specificity">
    <text>Highly expressed in heart and skeletal muscle.</text>
</comment>
<comment type="PTM">
    <text evidence="5">Isgylation negatively regulates its activity.</text>
</comment>
<comment type="PTM">
    <text evidence="1">N-myristoylation is essential for the recognition of its substrates for dephosphorylation.</text>
</comment>
<comment type="similarity">
    <text evidence="17">Belongs to the PP2C family.</text>
</comment>
<accession>O75688</accession>
<accession>Q461Q2</accession>
<accession>Q4J6C1</accession>
<accession>Q4J6C2</accession>
<accession>Q658R4</accession>
<accession>Q96ER6</accession>
<accession>Q9HAY8</accession>
<keyword id="KW-0002">3D-structure</keyword>
<keyword id="KW-0025">Alternative splicing</keyword>
<keyword id="KW-0963">Cytoplasm</keyword>
<keyword id="KW-0378">Hydrolase</keyword>
<keyword id="KW-1017">Isopeptide bond</keyword>
<keyword id="KW-0449">Lipoprotein</keyword>
<keyword id="KW-0460">Magnesium</keyword>
<keyword id="KW-0464">Manganese</keyword>
<keyword id="KW-0472">Membrane</keyword>
<keyword id="KW-0479">Metal-binding</keyword>
<keyword id="KW-0519">Myristate</keyword>
<keyword id="KW-0597">Phosphoprotein</keyword>
<keyword id="KW-0904">Protein phosphatase</keyword>
<keyword id="KW-1267">Proteomics identification</keyword>
<keyword id="KW-1185">Reference proteome</keyword>
<keyword id="KW-0832">Ubl conjugation</keyword>
<evidence type="ECO:0000250" key="1"/>
<evidence type="ECO:0000250" key="2">
    <source>
        <dbReference type="UniProtKB" id="P36993"/>
    </source>
</evidence>
<evidence type="ECO:0000255" key="3">
    <source>
        <dbReference type="PROSITE-ProRule" id="PRU01082"/>
    </source>
</evidence>
<evidence type="ECO:0000256" key="4">
    <source>
        <dbReference type="SAM" id="MobiDB-lite"/>
    </source>
</evidence>
<evidence type="ECO:0000269" key="5">
    <source>
    </source>
</evidence>
<evidence type="ECO:0000269" key="6">
    <source>
    </source>
</evidence>
<evidence type="ECO:0000269" key="7">
    <source>
    </source>
</evidence>
<evidence type="ECO:0000269" key="8">
    <source>
    </source>
</evidence>
<evidence type="ECO:0000269" key="9">
    <source>
    </source>
</evidence>
<evidence type="ECO:0000269" key="10">
    <source>
    </source>
</evidence>
<evidence type="ECO:0000269" key="11">
    <source>
    </source>
</evidence>
<evidence type="ECO:0000303" key="12">
    <source>
    </source>
</evidence>
<evidence type="ECO:0000303" key="13">
    <source>
    </source>
</evidence>
<evidence type="ECO:0000303" key="14">
    <source>
    </source>
</evidence>
<evidence type="ECO:0000303" key="15">
    <source>
    </source>
</evidence>
<evidence type="ECO:0000303" key="16">
    <source ref="3"/>
</evidence>
<evidence type="ECO:0000305" key="17"/>
<evidence type="ECO:0007744" key="18">
    <source>
        <dbReference type="PDB" id="2P8E"/>
    </source>
</evidence>
<evidence type="ECO:0007744" key="19">
    <source>
    </source>
</evidence>
<evidence type="ECO:0007829" key="20">
    <source>
        <dbReference type="PDB" id="2P8E"/>
    </source>
</evidence>
<proteinExistence type="evidence at protein level"/>
<protein>
    <recommendedName>
        <fullName>Protein phosphatase 1B</fullName>
        <ecNumber>3.1.3.16</ecNumber>
    </recommendedName>
    <alternativeName>
        <fullName>Protein phosphatase 2C isoform beta</fullName>
        <shortName>PP2C-beta</shortName>
    </alternativeName>
</protein>